<organism>
    <name type="scientific">Sinomonas cyclohexanicum</name>
    <name type="common">Corynebacterium cyclohexanicum</name>
    <dbReference type="NCBI Taxonomy" id="322009"/>
    <lineage>
        <taxon>Bacteria</taxon>
        <taxon>Bacillati</taxon>
        <taxon>Actinomycetota</taxon>
        <taxon>Actinomycetes</taxon>
        <taxon>Micrococcales</taxon>
        <taxon>Micrococcaceae</taxon>
        <taxon>Sinomonas</taxon>
    </lineage>
</organism>
<sequence length="259" mass="27076">MSRVSDRVAEKVALISGAARGMGASHAQVLAAHGANVVIADLLEDEGRALAEKINAEFNTGIGRDVALFVHLDVTDYESWTAAVGAAVERFGTLDVLVNNAGIFTRGSVEDADVDEWRRTIEIDLTGNFLGMKAAVPAMKAAGGSIINISSIAGLVGFKNRAAYAAAKWGVQGLTKTSAMDLGPYNIRVNSVHPGSVKTPMTAGLKRGFGQIPLGRDAETQEISDLILFLASDESSFMTGANLAIDGGETAGNNLRQDA</sequence>
<proteinExistence type="evidence at protein level"/>
<keyword id="KW-0520">NAD</keyword>
<keyword id="KW-0560">Oxidoreductase</keyword>
<name>CHCB1_SINCY</name>
<feature type="chain" id="PRO_0000460808" description="Trans-4-hydroxycyclohexanecarboxylate dehydrogenase">
    <location>
        <begin position="1"/>
        <end position="259"/>
    </location>
</feature>
<feature type="active site" description="Proton acceptor" evidence="1">
    <location>
        <position position="164"/>
    </location>
</feature>
<feature type="binding site" evidence="1">
    <location>
        <position position="20"/>
    </location>
    <ligand>
        <name>NAD(+)</name>
        <dbReference type="ChEBI" id="CHEBI:57540"/>
    </ligand>
</feature>
<feature type="binding site" evidence="1">
    <location>
        <position position="22"/>
    </location>
    <ligand>
        <name>NAD(+)</name>
        <dbReference type="ChEBI" id="CHEBI:57540"/>
    </ligand>
</feature>
<feature type="binding site" evidence="1">
    <location>
        <position position="41"/>
    </location>
    <ligand>
        <name>NAD(+)</name>
        <dbReference type="ChEBI" id="CHEBI:57540"/>
    </ligand>
</feature>
<feature type="binding site" evidence="1">
    <location>
        <position position="73"/>
    </location>
    <ligand>
        <name>NAD(+)</name>
        <dbReference type="ChEBI" id="CHEBI:57540"/>
    </ligand>
</feature>
<feature type="binding site" evidence="1">
    <location>
        <position position="74"/>
    </location>
    <ligand>
        <name>NAD(+)</name>
        <dbReference type="ChEBI" id="CHEBI:57540"/>
    </ligand>
</feature>
<feature type="binding site" evidence="1">
    <location>
        <position position="100"/>
    </location>
    <ligand>
        <name>NAD(+)</name>
        <dbReference type="ChEBI" id="CHEBI:57540"/>
    </ligand>
</feature>
<feature type="binding site" evidence="1">
    <location>
        <position position="164"/>
    </location>
    <ligand>
        <name>NAD(+)</name>
        <dbReference type="ChEBI" id="CHEBI:57540"/>
    </ligand>
</feature>
<feature type="binding site" evidence="1">
    <location>
        <position position="168"/>
    </location>
    <ligand>
        <name>NAD(+)</name>
        <dbReference type="ChEBI" id="CHEBI:57540"/>
    </ligand>
</feature>
<feature type="binding site" evidence="1">
    <location>
        <position position="197"/>
    </location>
    <ligand>
        <name>NAD(+)</name>
        <dbReference type="ChEBI" id="CHEBI:57540"/>
    </ligand>
</feature>
<feature type="binding site" evidence="1">
    <location>
        <position position="199"/>
    </location>
    <ligand>
        <name>NAD(+)</name>
        <dbReference type="ChEBI" id="CHEBI:57540"/>
    </ligand>
</feature>
<feature type="binding site" evidence="1">
    <location>
        <position position="202"/>
    </location>
    <ligand>
        <name>NAD(+)</name>
        <dbReference type="ChEBI" id="CHEBI:57540"/>
    </ligand>
</feature>
<comment type="function">
    <text evidence="2 3">Dehydrogenase involved in a cyclohexanecarboxylate (CHCA) degradation pathway (PubMed:3292236, PubMed:34583900). Catalyzes the NAD(+)-dependent dehydrogenation of trans-4-hydroxycyclohexanecarboxylate (trans-4-hydroxyCHCA) to form 4-oxocyclohexanecarboxylate (4-oxoCHCA) (PubMed:3292236, PubMed:34583900). Is highly specific for the trans-4-hydroxy derivative and shows only weak activity with cis-4-hydroxyCHCA (PubMed:34583900). Can also catalyze the reverse reaction (4-oxoCHCA reduction) with a higher catalytic efficiency (PubMed:3292236, PubMed:34583900). In the reverse reaction, is highly specific for 4-oxoCHCA and cannot use either the 2-oxo or the 3-oxo homolog as substrate (PubMed:3292236). Cannot use NADP(+) (PubMed:3292236, PubMed:34583900).</text>
</comment>
<comment type="catalytic activity">
    <reaction evidence="2 3">
        <text>trans-4-hydroxycyclohexane-1-carboxylate + NAD(+) = 4-oxocyclohexane-1-carboxylate + NADH + H(+)</text>
        <dbReference type="Rhea" id="RHEA:17429"/>
        <dbReference type="ChEBI" id="CHEBI:15378"/>
        <dbReference type="ChEBI" id="CHEBI:15777"/>
        <dbReference type="ChEBI" id="CHEBI:57540"/>
        <dbReference type="ChEBI" id="CHEBI:57906"/>
        <dbReference type="ChEBI" id="CHEBI:57945"/>
        <dbReference type="EC" id="1.1.1.226"/>
    </reaction>
    <physiologicalReaction direction="left-to-right" evidence="3">
        <dbReference type="Rhea" id="RHEA:17430"/>
    </physiologicalReaction>
</comment>
<comment type="activity regulation">
    <text evidence="2">Strongly inhibited by N-bromosuccinimide (PubMed:3292236). Not inhibited by sulfhydryl reagents, such as iodoacetic acid, iodoacetamide, N-ethylmaleimide and p-hydroxymercuribenzoic acid (PubMed:3292236).</text>
</comment>
<comment type="biophysicochemical properties">
    <kinetics>
        <KM evidence="3">0.97 mM for trans-4-hydroxyCHCA</KM>
        <KM evidence="2">0.51 mM for trans-4-hydroxyCHCA (at pH 8.8)</KM>
        <KM evidence="3">3.4 mM for cis-4-hydroxyCHCA</KM>
        <KM evidence="2">0.23 mM for NAD(+) (at pH 8.8)</KM>
        <KM evidence="3">0.87 mM for 4-oxoCHCA</KM>
        <KM evidence="2">0.5 mM for 4-oxoCHCA (at pH 6.8)</KM>
        <KM evidence="2">0.28 mM for NADH (at pH 6.8)</KM>
        <Vmax evidence="3">110.0 umol/min/mg enzyme with trans-4-hydroxyCHCA as substrate</Vmax>
        <Vmax evidence="2">42.0 umol/min/mg enzyme with trans-4-hydroxyCHCA as substrate (at pH 8.8)</Vmax>
        <Vmax evidence="3">0.052 umol/min/mg enzyme with cis-4-hydroxyCHCA as substrate</Vmax>
        <Vmax evidence="2">40.0 umol/min/mg enzyme with NAD(+) as substrate (at pH 8.8)</Vmax>
        <Vmax evidence="3">1300.0 umol/min/mg enzyme with 4-oxoCHCA as substrate</Vmax>
        <Vmax evidence="2">104.0 umol/min/mg enzyme with 4-oxoCHCA as substrate (at pH 6.8)</Vmax>
        <Vmax evidence="2">171.0 umol/min/mg enzyme with NADH as substrate (at pH 6.8)</Vmax>
        <text evidence="3">kcat is 55 sec(-1) with trans-4-hydroxyCHCA as substrate. kcat is 0.026 sec(-1) with cis-4-hydroxyCHCA as substrate. kcat is 650 sec(-1) with 4-oxoCHCA as substrate.</text>
    </kinetics>
    <phDependence>
        <text evidence="3">Optimum pH is 8.0 for dehydrogenation and 6.4 for the reverse reaction.</text>
    </phDependence>
</comment>
<comment type="subunit">
    <text evidence="2 3">Homodimer (PubMed:3292236). Homotetramer (PubMed:34583900).</text>
</comment>
<comment type="induction">
    <text evidence="3">Induced by CHCA, trans-4-hydroxyCHCA and 4-oxoCHCA but not by 4-hydroxybenzoate (4-HBA).</text>
</comment>
<comment type="similarity">
    <text evidence="6">Belongs to the short-chain dehydrogenases/reductases (SDR) family.</text>
</comment>
<reference key="1">
    <citation type="journal article" date="2021" name="J. Biosci. Bioeng.">
        <title>Identification and characterization of a chc gene cluster responsible for the aromatization pathway of cyclohexanecarboxylate degradation in Sinomonas cyclohexanicum ATCC 51369.</title>
        <authorList>
            <person name="Yamamoto T."/>
            <person name="Hasegawa Y."/>
            <person name="Lau P.C.K."/>
            <person name="Iwaki H."/>
        </authorList>
    </citation>
    <scope>NUCLEOTIDE SEQUENCE [LARGE SCALE GENOMIC DNA]</scope>
    <scope>FUNCTION</scope>
    <scope>CATALYTIC ACTIVITY</scope>
    <scope>BIOPHYSICOCHEMICAL PROPERTIES</scope>
    <scope>SUBUNIT</scope>
    <scope>INDUCTION</scope>
    <source>
        <strain>ATCC 51369 / MU</strain>
    </source>
</reference>
<reference key="2">
    <citation type="journal article" date="1988" name="Eur. J. Biochem.">
        <title>Purification and properties of 4-hydroxycyclohexanecarboxylate dehydrogenase from Corynebacterium cyclohexanicum.</title>
        <authorList>
            <person name="Obata H."/>
            <person name="Uebayasi M."/>
            <person name="Kaneda T."/>
        </authorList>
    </citation>
    <scope>FUNCTION</scope>
    <scope>CATALYTIC ACTIVITY</scope>
    <scope>ACTIVITY REGULATION</scope>
    <scope>BIOPHYSICOCHEMICAL PROPERTIES</scope>
    <scope>SUBUNIT</scope>
    <source>
        <strain>ATCC 51369 / MU</strain>
    </source>
</reference>
<gene>
    <name evidence="5" type="primary">chcB1</name>
    <name evidence="7" type="ORF">SCMU_09900</name>
</gene>
<accession>P0DXE0</accession>
<evidence type="ECO:0000250" key="1">
    <source>
        <dbReference type="UniProtKB" id="P9WGT1"/>
    </source>
</evidence>
<evidence type="ECO:0000269" key="2">
    <source>
    </source>
</evidence>
<evidence type="ECO:0000269" key="3">
    <source>
    </source>
</evidence>
<evidence type="ECO:0000303" key="4">
    <source>
    </source>
</evidence>
<evidence type="ECO:0000303" key="5">
    <source>
    </source>
</evidence>
<evidence type="ECO:0000305" key="6"/>
<evidence type="ECO:0000312" key="7">
    <source>
        <dbReference type="EMBL" id="BCT75148.1"/>
    </source>
</evidence>
<protein>
    <recommendedName>
        <fullName evidence="5">Trans-4-hydroxycyclohexanecarboxylate dehydrogenase</fullName>
        <shortName evidence="5">Trans-4-hydroxyCHCA dehydrogenase</shortName>
        <ecNumber evidence="2 3">1.1.1.226</ecNumber>
    </recommendedName>
    <alternativeName>
        <fullName evidence="4">4-hydroxycyclohexanecarboxylate dehydrogenase</fullName>
    </alternativeName>
</protein>
<dbReference type="EC" id="1.1.1.226" evidence="2 3"/>
<dbReference type="EMBL" id="AP024525">
    <property type="protein sequence ID" value="BCT75148.1"/>
    <property type="molecule type" value="Genomic_DNA"/>
</dbReference>
<dbReference type="RefSeq" id="WP_229231918.1">
    <property type="nucleotide sequence ID" value="NZ_AP024525.1"/>
</dbReference>
<dbReference type="SMR" id="P0DXE0"/>
<dbReference type="KEGG" id="ccyc:SCMU_09900"/>
<dbReference type="GO" id="GO:0016491">
    <property type="term" value="F:oxidoreductase activity"/>
    <property type="evidence" value="ECO:0007669"/>
    <property type="project" value="UniProtKB-KW"/>
</dbReference>
<dbReference type="FunFam" id="3.40.50.720:FF:000084">
    <property type="entry name" value="Short-chain dehydrogenase reductase"/>
    <property type="match status" value="1"/>
</dbReference>
<dbReference type="Gene3D" id="3.40.50.720">
    <property type="entry name" value="NAD(P)-binding Rossmann-like Domain"/>
    <property type="match status" value="1"/>
</dbReference>
<dbReference type="InterPro" id="IPR036291">
    <property type="entry name" value="NAD(P)-bd_dom_sf"/>
</dbReference>
<dbReference type="InterPro" id="IPR002347">
    <property type="entry name" value="SDR_fam"/>
</dbReference>
<dbReference type="PANTHER" id="PTHR24321">
    <property type="entry name" value="DEHYDROGENASES, SHORT CHAIN"/>
    <property type="match status" value="1"/>
</dbReference>
<dbReference type="PANTHER" id="PTHR24321:SF8">
    <property type="entry name" value="ESTRADIOL 17-BETA-DEHYDROGENASE 8-RELATED"/>
    <property type="match status" value="1"/>
</dbReference>
<dbReference type="Pfam" id="PF13561">
    <property type="entry name" value="adh_short_C2"/>
    <property type="match status" value="1"/>
</dbReference>
<dbReference type="PRINTS" id="PR00081">
    <property type="entry name" value="GDHRDH"/>
</dbReference>
<dbReference type="PRINTS" id="PR00080">
    <property type="entry name" value="SDRFAMILY"/>
</dbReference>
<dbReference type="SUPFAM" id="SSF51735">
    <property type="entry name" value="NAD(P)-binding Rossmann-fold domains"/>
    <property type="match status" value="1"/>
</dbReference>